<keyword id="KW-0002">3D-structure</keyword>
<keyword id="KW-0051">Antiviral defense</keyword>
<keyword id="KW-0067">ATP-binding</keyword>
<keyword id="KW-0342">GTP-binding</keyword>
<keyword id="KW-1017">Isopeptide bond</keyword>
<keyword id="KW-0460">Magnesium</keyword>
<keyword id="KW-0479">Metal-binding</keyword>
<keyword id="KW-0546">Nucleotide metabolism</keyword>
<keyword id="KW-0547">Nucleotide-binding</keyword>
<keyword id="KW-0548">Nucleotidyltransferase</keyword>
<keyword id="KW-1185">Reference proteome</keyword>
<keyword id="KW-0808">Transferase</keyword>
<keyword id="KW-0843">Virulence</keyword>
<comment type="function">
    <text evidence="3 4 8 9 10 14">Cyclic nucleotide synthase (second messenger synthase) of a CBASS antivirus system (PubMed:22500802, PubMed:25131990). CBASS (cyclic oligonucleotide-based antiphage signaling system) provides immunity against bacteriophages. The CD-NTase protein (DncV, this protein) synthesizes cyclic nucleotides in response to infection; these serve as specific second messenger signals. The signals activate a diverse range of effectors, leading to bacterial cell death and thus abortive phage infection (PubMed:31533127, PubMed:32544385, PubMed:36755092). A type II-A(GA) CBASS system (PubMed:32839535).</text>
</comment>
<comment type="function">
    <text evidence="3 4 7 10">Catalyzes the synthesis of 3',3'-cyclic GMP-AMP (cGAMP), a second messenger in cell signal transduction, from GTP and ATP in response to phage infection (PubMed:22500802, PubMed:25131990, PubMed:29891656, PubMed:36755092). Also able to produce c-di-AMP and c-di-GMP from ATP and GTP, respectively; however, cGAMP is the dominant molecule produced by DncV in vivo, contrary to the 2'3'-cGAMP produced by eukaryotes. Is required for efficient V.cholerae intestinal colonization, and down-regulates the colonization-influencing process of chemotaxis. Is not active with dATP, TTP, UTP or CTP. Its product controls the activity of cGAMP-activated phospholipase CapV, a patatin-like lipase that is a direct cGAMP receptor encoded in the dncV operon (PubMed:29891656).</text>
</comment>
<comment type="function">
    <text evidence="8 9 10 11">Protects E.coli against phage infection. When the CBASS operon (capV-dncV-cap2-cap3) is introduced in E.coli MG1655 there is about 100-fold protection against phages P1 and T2 (PubMed:31533127). When the operon is introduced in E.coli MG1655 there is a more than 10(3) decrease in the efficiency of T2 plaque formation. Protects 100-fold against phage T5, offers no protection against T7 (PubMed:32544385). When the operon is introduced in E.coli MG1655 it protects against phages T2, T4, T5 and T6 (PubMed:36755092). Another paper shows the operon confers protection against phages P1, T2, T5 and T6 but not T4 or lambda (PubMed:36848932).</text>
</comment>
<comment type="catalytic activity">
    <reaction evidence="3 4">
        <text>GTP + ATP = 3',3'-cGAMP + 2 diphosphate</text>
        <dbReference type="Rhea" id="RHEA:35647"/>
        <dbReference type="ChEBI" id="CHEBI:30616"/>
        <dbReference type="ChEBI" id="CHEBI:33019"/>
        <dbReference type="ChEBI" id="CHEBI:37565"/>
        <dbReference type="ChEBI" id="CHEBI:71501"/>
    </reaction>
    <physiologicalReaction direction="left-to-right" evidence="3">
        <dbReference type="Rhea" id="RHEA:35648"/>
    </physiologicalReaction>
</comment>
<comment type="cofactor">
    <cofactor evidence="4">
        <name>Mg(2+)</name>
        <dbReference type="ChEBI" id="CHEBI:18420"/>
    </cofactor>
    <text evidence="4">Binds 1 Mg(2+) ion per subunit.</text>
</comment>
<comment type="activity regulation">
    <text evidence="4 5 10">Primed for activation by Cap2 which conjugates it to cellular proteins; priming is target protein-specific (green fluorescent protein does not activate the enzyme), but which protein(s) activate is unclear (PubMed:36755092). Enzymatic activity of DncV is inhibited by folate-like molecules, such as 5-methyltetrahydrofolate di-glutamate and 5-methyltetrahydrofolate, suggesting the existence of a signaling pathway that links folate-like metabolism cofactors to the regulation of cyclic dinucleotide second messenger synthesis (PubMed:25201413). Lacks a regulatory loop and is constitutively activated (PubMed:25131990).</text>
</comment>
<comment type="subunit">
    <text evidence="1 4 10">Monomer (PubMed:25131990). Interacts with Cap2 in the presence and absence of phage T2 (PubMed:36755092). A Cap2 dimer is bound on either side by a DncV monomer (By similarity).</text>
</comment>
<comment type="induction">
    <text evidence="3 16 17">Expression is repressed by the transcriptional regulator VspR (PubMed:22500802). Part of a CBASS operon consisting of capV-dncV-cap2-cap3 (Probable).</text>
</comment>
<comment type="PTM">
    <text evidence="10 11">In bacteria expressing capV-cdnD-cap2, this protein is conjugated to a number of other proteins (by Cap2 via this protein's C-terminal Gly residue), many of which are involved in metabolism (PubMed:36755092, PubMed:36848932). More conjugated protein is found in the absence of Cap3 (PubMed:36848932).</text>
</comment>
<comment type="disruption phenotype">
    <text evidence="3">Cells lacking this gene show a significant defects in intestinal colonization.</text>
</comment>
<comment type="miscellaneous">
    <text evidence="7">Overproduction of the cGAMP synthase DncV leads to an increase in intracellular cGAMP, and induces the formation of cells more translucent than normal with a defect in cell membrane integrity, planktonic growth arrest and a small colony phenotype in El Tor V.cholerae.</text>
</comment>
<comment type="similarity">
    <text evidence="15">Belongs to the CD-NTase family. A01 subfamily.</text>
</comment>
<reference key="1">
    <citation type="journal article" date="2000" name="Nature">
        <title>DNA sequence of both chromosomes of the cholera pathogen Vibrio cholerae.</title>
        <authorList>
            <person name="Heidelberg J.F."/>
            <person name="Eisen J.A."/>
            <person name="Nelson W.C."/>
            <person name="Clayton R.A."/>
            <person name="Gwinn M.L."/>
            <person name="Dodson R.J."/>
            <person name="Haft D.H."/>
            <person name="Hickey E.K."/>
            <person name="Peterson J.D."/>
            <person name="Umayam L.A."/>
            <person name="Gill S.R."/>
            <person name="Nelson K.E."/>
            <person name="Read T.D."/>
            <person name="Tettelin H."/>
            <person name="Richardson D.L."/>
            <person name="Ermolaeva M.D."/>
            <person name="Vamathevan J.J."/>
            <person name="Bass S."/>
            <person name="Qin H."/>
            <person name="Dragoi I."/>
            <person name="Sellers P."/>
            <person name="McDonald L.A."/>
            <person name="Utterback T.R."/>
            <person name="Fleischmann R.D."/>
            <person name="Nierman W.C."/>
            <person name="White O."/>
            <person name="Salzberg S.L."/>
            <person name="Smith H.O."/>
            <person name="Colwell R.R."/>
            <person name="Mekalanos J.J."/>
            <person name="Venter J.C."/>
            <person name="Fraser C.M."/>
        </authorList>
    </citation>
    <scope>NUCLEOTIDE SEQUENCE [LARGE SCALE GENOMIC DNA]</scope>
    <source>
        <strain>ATCC 39315 / El Tor Inaba N16961</strain>
    </source>
</reference>
<reference key="2">
    <citation type="journal article" date="2012" name="Cell">
        <title>Coordinated regulation of accessory genetic elements produces cyclic di-nucleotides for V. cholerae virulence.</title>
        <authorList>
            <person name="Davies B.W."/>
            <person name="Bogard R.W."/>
            <person name="Young T.S."/>
            <person name="Mekalanos J.J."/>
        </authorList>
    </citation>
    <scope>FUNCTION</scope>
    <scope>CATALYTIC ACTIVITY</scope>
    <scope>SUBSTRATE SPECIFICITY</scope>
    <scope>GENE NAME</scope>
    <scope>INDUCTION</scope>
    <scope>DISRUPTION PHENOTYPE</scope>
    <scope>MUTAGENESIS OF 131-ASP--ASP-133</scope>
    <source>
        <strain>ATCC 55056 / El Tor Ogawa E7946</strain>
        <strain>El Tor C6706</strain>
    </source>
</reference>
<reference key="3">
    <citation type="journal article" date="2018" name="Proc. Natl. Acad. Sci. U.S.A.">
        <title>Direct activation of a phospholipase by cyclic GMP-AMP in El Tor Vibrio cholerae.</title>
        <authorList>
            <person name="Severin G.B."/>
            <person name="Ramliden M.S."/>
            <person name="Hawver L.A."/>
            <person name="Wang K."/>
            <person name="Pell M.E."/>
            <person name="Kieninger A.K."/>
            <person name="Khataokar A."/>
            <person name="O'Hara B.J."/>
            <person name="Behrmann L.V."/>
            <person name="Neiditch M.B."/>
            <person name="Benning C."/>
            <person name="Waters C.M."/>
            <person name="Ng W.L."/>
        </authorList>
    </citation>
    <scope>FUNCTION</scope>
    <scope>OVERPRODUCTION PHENOTYPE</scope>
    <scope>MUTAGENESIS OF 131-ASP--ASP-133</scope>
</reference>
<reference key="4">
    <citation type="journal article" date="2019" name="Nature">
        <title>Bacterial cGAS-like enzymes synthesize diverse nucleotide signals.</title>
        <authorList>
            <person name="Whiteley A.T."/>
            <person name="Eaglesham J.B."/>
            <person name="de Oliveira Mann C.C."/>
            <person name="Morehouse B.R."/>
            <person name="Lowey B."/>
            <person name="Nieminen E.A."/>
            <person name="Danilchanka O."/>
            <person name="King D.S."/>
            <person name="Lee A.S.Y."/>
            <person name="Mekalanos J.J."/>
            <person name="Kranzusch P.J."/>
        </authorList>
    </citation>
    <scope>NOMENCLATURE</scope>
    <scope>SIMILARITY</scope>
</reference>
<reference key="5">
    <citation type="journal article" date="2019" name="Nature">
        <title>Cyclic GMP-AMP signalling protects bacteria against viral infection.</title>
        <authorList>
            <person name="Cohen D."/>
            <person name="Melamed S."/>
            <person name="Millman A."/>
            <person name="Shulman G."/>
            <person name="Oppenheimer-Shaanan Y."/>
            <person name="Kacen A."/>
            <person name="Doron S."/>
            <person name="Amitai G."/>
            <person name="Sorek R."/>
        </authorList>
    </citation>
    <scope>ANTIVIRAL DEFENSE</scope>
    <scope>OPERON STRUCTURE</scope>
    <source>
        <strain>El Tor / Serotype O1</strain>
    </source>
</reference>
<reference key="6">
    <citation type="journal article" date="2020" name="Cell">
        <title>CBASS immunity uses CARF-related effectors to sense 3'-5' and 2'-5'-linked cyclic oligonucleotide signals and protect bacteria from phage infection.</title>
        <authorList>
            <person name="Lowey B."/>
            <person name="Whiteley A.T."/>
            <person name="Keszei A.F.A."/>
            <person name="Morehouse B.R."/>
            <person name="Antine S.P."/>
            <person name="Cabrera V.J."/>
            <person name="Kashin D."/>
            <person name="Schwede F."/>
            <person name="Mekalanos J.J."/>
            <person name="Shao S."/>
            <person name="Lee A.S.Y."/>
            <person name="Kranzusch P.J."/>
        </authorList>
    </citation>
    <scope>ANTIVIRAL DEFENSE</scope>
    <scope>OPERON STRUCTURE</scope>
    <source>
        <strain>El Tor C6706</strain>
    </source>
</reference>
<reference key="7">
    <citation type="journal article" date="2020" name="Nat. Microbiol.">
        <title>Diversity and classification of cyclic-oligonucleotide-based anti-phage signalling systems.</title>
        <authorList>
            <person name="Millman A."/>
            <person name="Melamed S."/>
            <person name="Amitai G."/>
            <person name="Sorek R."/>
        </authorList>
    </citation>
    <scope>CLASSIFICATION AND NOMENCLATURE</scope>
</reference>
<reference key="8">
    <citation type="journal article" date="2023" name="Nature">
        <title>An E1-E2 fusion protein primes antiviral immune signalling in bacteria.</title>
        <authorList>
            <person name="Ledvina H.E."/>
            <person name="Ye Q."/>
            <person name="Gu Y."/>
            <person name="Sullivan A.E."/>
            <person name="Quan Y."/>
            <person name="Lau R.K."/>
            <person name="Zhou H."/>
            <person name="Corbett K.D."/>
            <person name="Whiteley A.T."/>
        </authorList>
    </citation>
    <scope>FUNCTION</scope>
    <scope>ACTIVITY REGULATION</scope>
    <scope>CONJUGATION TO CELLULAR PROTEINS</scope>
    <scope>ANTIVIRAL DEFENSE</scope>
    <scope>INTERACTION WITH CAP2</scope>
    <scope>MUTAGENESIS OF 131-ASP--ASP-133; 433-MET-VAL-434; MET-433; VAL-434; SER-435 AND GLY-436</scope>
    <source>
        <strain>El Tor C6706</strain>
    </source>
</reference>
<reference key="9">
    <citation type="journal article" date="2023" name="Nature">
        <title>Ubiquitin-like conjugation by bacterial cGAS enhances anti-phage defence.</title>
        <authorList>
            <person name="Jenson J.M."/>
            <person name="Li T."/>
            <person name="Du F."/>
            <person name="Ea C.K."/>
            <person name="Chen Z.J."/>
        </authorList>
    </citation>
    <scope>ANTIVIRAL DEFENSE</scope>
    <scope>CONJUGATION TO CELLULAR PROTEINS</scope>
    <scope>MUTAGENESIS OF 131-ASP--ASP-133 AND GLY-436</scope>
    <source>
        <strain>El Tor C6706</strain>
    </source>
</reference>
<reference evidence="20 21 22" key="10">
    <citation type="journal article" date="2014" name="Cell">
        <title>Structure-guided reprogramming of human cGAS dinucleotide linkage specificity.</title>
        <authorList>
            <person name="Kranzusch P.J."/>
            <person name="Lee A.S."/>
            <person name="Wilson S.C."/>
            <person name="Solovykh M.S."/>
            <person name="Vance R.E."/>
            <person name="Berger J.M."/>
            <person name="Doudna J.A."/>
        </authorList>
    </citation>
    <scope>X-RAY CRYSTALLOGRAPHY (1.80 ANGSTROMS) OF 3-413 IN COMPLEX WITH MAGNESIUM AND CYCLIC DINUCLEOTIDE</scope>
    <scope>FUNCTION</scope>
    <scope>CATALYTIC ACTIVITY</scope>
    <scope>ACTIVITY REGULATION</scope>
    <scope>COFACTOR</scope>
    <scope>SUBUNIT</scope>
    <scope>MUTAGENESIS OF GLN-112 AND ILE-257</scope>
</reference>
<reference evidence="23 24 25 26" key="11">
    <citation type="journal article" date="2014" name="Mol. Cell">
        <title>Structural biochemistry of a Vibrio cholerae dinucleotide cyclase reveals cyclase activity regulation by folates.</title>
        <authorList>
            <person name="Zhu D."/>
            <person name="Wang L."/>
            <person name="Shang G."/>
            <person name="Liu X."/>
            <person name="Zhu J."/>
            <person name="Lu D."/>
            <person name="Wang L."/>
            <person name="Kan B."/>
            <person name="Zhang J.R."/>
            <person name="Xiang Y."/>
        </authorList>
    </citation>
    <scope>X-RAY CRYSTALLOGRAPHY (2.04 ANGSTROMS) OF 1-419 OF WILD-TYPE AND MUTANTS ALA-131/ALA-133 AND ASN-193 IN COMPLEXES WITH ATP; GTP; MAGNESIUM; 5-METHYLTETRAHYDROFOLATE AND 5-METHYLTETRAHYDROFOLATE DIGLUTAMATE</scope>
    <scope>ACTIVITY REGULATION</scope>
    <scope>MUTAGENESIS OF ARG-40; ARG-44; ARG-108; PHE-109; TYR-137 AND ASP-260</scope>
</reference>
<reference evidence="27 28 29 30" key="12">
    <citation type="journal article" date="2015" name="Structure">
        <title>Structural basis for the catalytic mechanism of DncV, bacterial homolog of cyclic GMP-AMP synthase.</title>
        <authorList>
            <person name="Kato K."/>
            <person name="Ishii R."/>
            <person name="Hirano S."/>
            <person name="Ishitani R."/>
            <person name="Nureki O."/>
        </authorList>
    </citation>
    <scope>X-RAY CRYSTALLOGRAPHY (1.55 ANGSTROMS) OF 1-215 AND 242-412 IN COMPLEX WITH 3'-DEOXY-GTP; 3'-DEOXY-ATP; GTP AND MAGNESIUM</scope>
</reference>
<protein>
    <recommendedName>
        <fullName>Cyclic GMP-AMP synthase</fullName>
        <shortName>c-GAMP synthase</shortName>
        <shortName evidence="13">cGAS</shortName>
        <ecNumber evidence="3 4">2.7.7.-</ecNumber>
    </recommendedName>
    <alternativeName>
        <fullName>3',3'-cGAMP synthase</fullName>
    </alternativeName>
    <alternativeName>
        <fullName evidence="12">Cyclic AMP-GMP synthase</fullName>
        <shortName evidence="12">c-AMP-GMP synthase</shortName>
    </alternativeName>
    <alternativeName>
        <fullName evidence="12">Dinucleotide cyclase DncV</fullName>
        <shortName evidence="13">CD-NTase</shortName>
    </alternativeName>
</protein>
<organism>
    <name type="scientific">Vibrio cholerae serotype O1 (strain ATCC 39315 / El Tor Inaba N16961)</name>
    <dbReference type="NCBI Taxonomy" id="243277"/>
    <lineage>
        <taxon>Bacteria</taxon>
        <taxon>Pseudomonadati</taxon>
        <taxon>Pseudomonadota</taxon>
        <taxon>Gammaproteobacteria</taxon>
        <taxon>Vibrionales</taxon>
        <taxon>Vibrionaceae</taxon>
        <taxon>Vibrio</taxon>
    </lineage>
</organism>
<gene>
    <name evidence="12" type="primary">dncV</name>
    <name type="ordered locus">VC_0179</name>
</gene>
<dbReference type="EC" id="2.7.7.-" evidence="3 4"/>
<dbReference type="EMBL" id="AE003852">
    <property type="protein sequence ID" value="AAF93355.1"/>
    <property type="molecule type" value="Genomic_DNA"/>
</dbReference>
<dbReference type="PIR" id="F82354">
    <property type="entry name" value="F82354"/>
</dbReference>
<dbReference type="RefSeq" id="NP_229836.1">
    <property type="nucleotide sequence ID" value="NC_002505.1"/>
</dbReference>
<dbReference type="RefSeq" id="WP_001901330.1">
    <property type="nucleotide sequence ID" value="NZ_LT906614.1"/>
</dbReference>
<dbReference type="PDB" id="4TXY">
    <property type="method" value="X-ray"/>
    <property type="resolution" value="3.00 A"/>
    <property type="chains" value="A/B=3-413"/>
</dbReference>
<dbReference type="PDB" id="4TXZ">
    <property type="method" value="X-ray"/>
    <property type="resolution" value="2.80 A"/>
    <property type="chains" value="A/B=3-413"/>
</dbReference>
<dbReference type="PDB" id="4TY0">
    <property type="method" value="X-ray"/>
    <property type="resolution" value="1.80 A"/>
    <property type="chains" value="A/B=3-413"/>
</dbReference>
<dbReference type="PDB" id="4U03">
    <property type="method" value="X-ray"/>
    <property type="resolution" value="2.04 A"/>
    <property type="chains" value="A/B=1-419"/>
</dbReference>
<dbReference type="PDB" id="4U0L">
    <property type="method" value="X-ray"/>
    <property type="resolution" value="2.10 A"/>
    <property type="chains" value="A/B=1-419"/>
</dbReference>
<dbReference type="PDB" id="4U0M">
    <property type="method" value="X-ray"/>
    <property type="resolution" value="2.30 A"/>
    <property type="chains" value="A/B=1-419"/>
</dbReference>
<dbReference type="PDB" id="4U0N">
    <property type="method" value="X-ray"/>
    <property type="resolution" value="2.10 A"/>
    <property type="chains" value="A/B=1-419"/>
</dbReference>
<dbReference type="PDB" id="4XJ1">
    <property type="method" value="X-ray"/>
    <property type="resolution" value="1.77 A"/>
    <property type="chains" value="A=1-215, A=242-412"/>
</dbReference>
<dbReference type="PDB" id="4XJ3">
    <property type="method" value="X-ray"/>
    <property type="resolution" value="1.65 A"/>
    <property type="chains" value="A=1-215, A=242-412"/>
</dbReference>
<dbReference type="PDB" id="4XJ4">
    <property type="method" value="X-ray"/>
    <property type="resolution" value="1.60 A"/>
    <property type="chains" value="A=1-215, A=242-412"/>
</dbReference>
<dbReference type="PDB" id="4XJ5">
    <property type="method" value="X-ray"/>
    <property type="resolution" value="1.55 A"/>
    <property type="chains" value="A=1-215, A=242-412"/>
</dbReference>
<dbReference type="PDB" id="5GO3">
    <property type="method" value="X-ray"/>
    <property type="resolution" value="2.20 A"/>
    <property type="chains" value="A/B=1-436"/>
</dbReference>
<dbReference type="PDBsum" id="4TXY"/>
<dbReference type="PDBsum" id="4TXZ"/>
<dbReference type="PDBsum" id="4TY0"/>
<dbReference type="PDBsum" id="4U03"/>
<dbReference type="PDBsum" id="4U0L"/>
<dbReference type="PDBsum" id="4U0M"/>
<dbReference type="PDBsum" id="4U0N"/>
<dbReference type="PDBsum" id="4XJ1"/>
<dbReference type="PDBsum" id="4XJ3"/>
<dbReference type="PDBsum" id="4XJ4"/>
<dbReference type="PDBsum" id="4XJ5"/>
<dbReference type="PDBsum" id="5GO3"/>
<dbReference type="SMR" id="Q9KVG7"/>
<dbReference type="STRING" id="243277.VC_0179"/>
<dbReference type="DNASU" id="2614190"/>
<dbReference type="EnsemblBacteria" id="AAF93355">
    <property type="protein sequence ID" value="AAF93355"/>
    <property type="gene ID" value="VC_0179"/>
</dbReference>
<dbReference type="KEGG" id="vch:VC_0179"/>
<dbReference type="PATRIC" id="fig|243277.26.peg.163"/>
<dbReference type="eggNOG" id="ENOG502Z9WZ">
    <property type="taxonomic scope" value="Bacteria"/>
</dbReference>
<dbReference type="HOGENOM" id="CLU_051668_0_0_6"/>
<dbReference type="BioCyc" id="MetaCyc:FY484_RS00965-MONOMER"/>
<dbReference type="BRENDA" id="2.7.7.B24">
    <property type="organism ID" value="15003"/>
</dbReference>
<dbReference type="EvolutionaryTrace" id="Q9KVG7"/>
<dbReference type="Proteomes" id="UP000000584">
    <property type="component" value="Chromosome 1"/>
</dbReference>
<dbReference type="GO" id="GO:0140701">
    <property type="term" value="F:3',3'-cyclic GMP-AMP synthase activity"/>
    <property type="evidence" value="ECO:0000314"/>
    <property type="project" value="UniProtKB"/>
</dbReference>
<dbReference type="GO" id="GO:0005524">
    <property type="term" value="F:ATP binding"/>
    <property type="evidence" value="ECO:0007669"/>
    <property type="project" value="UniProtKB-KW"/>
</dbReference>
<dbReference type="GO" id="GO:0052621">
    <property type="term" value="F:diguanylate cyclase activity"/>
    <property type="evidence" value="ECO:0000314"/>
    <property type="project" value="UniProtKB"/>
</dbReference>
<dbReference type="GO" id="GO:0005525">
    <property type="term" value="F:GTP binding"/>
    <property type="evidence" value="ECO:0007669"/>
    <property type="project" value="UniProtKB-KW"/>
</dbReference>
<dbReference type="GO" id="GO:0046872">
    <property type="term" value="F:metal ion binding"/>
    <property type="evidence" value="ECO:0007669"/>
    <property type="project" value="UniProtKB-KW"/>
</dbReference>
<dbReference type="GO" id="GO:0009190">
    <property type="term" value="P:cyclic nucleotide biosynthetic process"/>
    <property type="evidence" value="ECO:0000314"/>
    <property type="project" value="UniProtKB"/>
</dbReference>
<dbReference type="GO" id="GO:0051607">
    <property type="term" value="P:defense response to virus"/>
    <property type="evidence" value="ECO:0007669"/>
    <property type="project" value="UniProtKB-KW"/>
</dbReference>
<dbReference type="GO" id="GO:0050922">
    <property type="term" value="P:negative regulation of chemotaxis"/>
    <property type="evidence" value="ECO:0000314"/>
    <property type="project" value="UniProtKB"/>
</dbReference>
<dbReference type="InterPro" id="IPR048445">
    <property type="entry name" value="DncV-like_NTFase"/>
</dbReference>
<dbReference type="InterPro" id="IPR048446">
    <property type="entry name" value="DncV_C"/>
</dbReference>
<dbReference type="InterPro" id="IPR047805">
    <property type="entry name" value="GAMP_synthase"/>
</dbReference>
<dbReference type="NCBIfam" id="NF041078">
    <property type="entry name" value="cGAS"/>
    <property type="match status" value="1"/>
</dbReference>
<dbReference type="Pfam" id="PF21654">
    <property type="entry name" value="DncV-like_NTFase"/>
    <property type="match status" value="1"/>
</dbReference>
<dbReference type="Pfam" id="PF21713">
    <property type="entry name" value="DncV_C"/>
    <property type="match status" value="1"/>
</dbReference>
<name>DNCV_VIBCH</name>
<sequence>MRMTWNFHQYYTNRNDGLMGKLVLTDEEKNNLKALRKIIRLRTRDVFEEAKGIAKAVKKSALTFEIIQEKVSTTQIKHLSDSEQREVAKLIYEMDDDARDEFLGLTPRFWTQGSFQYDTLNRPFQPGQEMDIDDGTYMPMPIFESEPKIGHSLLILLVDASLKSLVAENHGWKFEAKQTCGRIKIEAEKTHIDVPMYAIPKDEFQKKQIALEANRSFVKGAIFESYVADSITDDSETYELDSENVNLALREGDRKWINSDPKIVEDWFNDSCIRIGKHLRKVCRFMKAWRDAQWDVGGPSSISLMAATVNILDSVAHDASDLGETMKIIAKHLPSEFARGVESPDSTDEKPLFPPSYKHGPREMDIMSKLERLPEILSSAESADSKSEALKKINMAFGNRVTNSELIVLAKALPAFAQEPSSASKPEKISSTMVSG</sequence>
<accession>Q9KVG7</accession>
<feature type="chain" id="PRO_0000423945" description="Cyclic GMP-AMP synthase">
    <location>
        <begin position="1"/>
        <end position="436"/>
    </location>
</feature>
<feature type="region of interest" description="Disordered" evidence="2">
    <location>
        <begin position="339"/>
        <end position="358"/>
    </location>
</feature>
<feature type="region of interest" description="Disordered" evidence="2">
    <location>
        <begin position="417"/>
        <end position="436"/>
    </location>
</feature>
<feature type="compositionally biased region" description="Polar residues" evidence="2">
    <location>
        <begin position="419"/>
        <end position="436"/>
    </location>
</feature>
<feature type="binding site" evidence="4 5 6 23 25 28 29 30">
    <location>
        <begin position="112"/>
        <end position="117"/>
    </location>
    <ligand>
        <name>GTP</name>
        <dbReference type="ChEBI" id="CHEBI:37565"/>
    </ligand>
</feature>
<feature type="binding site" evidence="4 5 6 20 21 22 23 26 30">
    <location>
        <position position="131"/>
    </location>
    <ligand>
        <name>Mg(2+)</name>
        <dbReference type="ChEBI" id="CHEBI:18420"/>
        <note>catalytic</note>
    </ligand>
</feature>
<feature type="binding site" evidence="4 5 6 20 21 22 23 26 30">
    <location>
        <position position="133"/>
    </location>
    <ligand>
        <name>Mg(2+)</name>
        <dbReference type="ChEBI" id="CHEBI:18420"/>
        <note>catalytic</note>
    </ligand>
</feature>
<feature type="binding site" evidence="4 5 25">
    <location>
        <position position="182"/>
    </location>
    <ligand>
        <name>ATP</name>
        <dbReference type="ChEBI" id="CHEBI:30616"/>
    </ligand>
</feature>
<feature type="binding site" evidence="4 5 6 20 21 22 23 26 30">
    <location>
        <position position="193"/>
    </location>
    <ligand>
        <name>Mg(2+)</name>
        <dbReference type="ChEBI" id="CHEBI:18420"/>
        <note>catalytic</note>
    </ligand>
</feature>
<feature type="binding site" evidence="4 5 23 28 29 30">
    <location>
        <position position="259"/>
    </location>
    <ligand>
        <name>ATP</name>
        <dbReference type="ChEBI" id="CHEBI:30616"/>
    </ligand>
</feature>
<feature type="binding site" evidence="4 5 6 23 25 28 29 30">
    <location>
        <position position="287"/>
    </location>
    <ligand>
        <name>GTP</name>
        <dbReference type="ChEBI" id="CHEBI:37565"/>
    </ligand>
</feature>
<feature type="binding site" evidence="4 5 6 23 25 28 29 30">
    <location>
        <position position="301"/>
    </location>
    <ligand>
        <name>GTP</name>
        <dbReference type="ChEBI" id="CHEBI:37565"/>
    </ligand>
</feature>
<feature type="binding site" evidence="4 5 6 23 25 28 30">
    <location>
        <position position="348"/>
    </location>
    <ligand>
        <name>GTP</name>
        <dbReference type="ChEBI" id="CHEBI:37565"/>
    </ligand>
</feature>
<feature type="cross-link" description="Glycyl lysine isopeptide (Gly-Lys) (interchain with K-? in acceptor proteins)" evidence="18 19">
    <location>
        <position position="436"/>
    </location>
</feature>
<feature type="mutagenesis site" description="Abolishes enzyme activity." evidence="5">
    <original>R</original>
    <variation>A</variation>
    <location>
        <position position="40"/>
    </location>
</feature>
<feature type="mutagenesis site" description="Impairs protein folding." evidence="5">
    <original>R</original>
    <variation>E</variation>
    <location>
        <position position="44"/>
    </location>
</feature>
<feature type="mutagenesis site" description="Abolishes enzyme activity." evidence="5">
    <original>R</original>
    <variation>W</variation>
    <location>
        <position position="108"/>
    </location>
</feature>
<feature type="mutagenesis site" description="Abolishes enzyme activity." evidence="5">
    <original>F</original>
    <variation>P</variation>
    <location>
        <position position="109"/>
    </location>
</feature>
<feature type="mutagenesis site" description="Abolishes enzyme activity." evidence="4">
    <original>Q</original>
    <variation>T</variation>
    <location>
        <position position="112"/>
    </location>
</feature>
<feature type="mutagenesis site" description="Loss of catalytic activity. Lack of effect on chemotaxis. Overexpression of this mutant does not lead to substantial growth arrest, in contrast to wild-type. Loss of defense against phages P1, T2, T4, T5 or T6." evidence="3 7 10">
    <original>DID</original>
    <variation>AIA</variation>
    <location>
        <begin position="131"/>
        <end position="133"/>
    </location>
</feature>
<feature type="mutagenesis site" description="Abolishes enzyme activity." evidence="5">
    <original>Y</original>
    <variation>R</variation>
    <location>
        <position position="137"/>
    </location>
</feature>
<feature type="mutagenesis site" description="No effect on enzyme activity." evidence="4">
    <original>I</original>
    <variation>R</variation>
    <location>
        <position position="257"/>
    </location>
</feature>
<feature type="mutagenesis site" description="Impairs protein folding." evidence="5">
    <original>D</original>
    <variation>A</variation>
    <location>
        <position position="260"/>
    </location>
</feature>
<feature type="mutagenesis site" description="DncV-GFP fusion no longer cleaved by Cap3." evidence="10">
    <original>MV</original>
    <variation>AA</variation>
    <location>
        <begin position="433"/>
        <end position="434"/>
    </location>
</feature>
<feature type="mutagenesis site" description="DncV-GFP fusion no longer cleaved by Cap3." evidence="10">
    <original>M</original>
    <variation>E</variation>
    <variation>A</variation>
    <location>
        <position position="433"/>
    </location>
</feature>
<feature type="mutagenesis site" description="DncV-GFP fusion cleaved by Cap3." evidence="10">
    <original>V</original>
    <variation>E</variation>
    <location>
        <position position="434"/>
    </location>
</feature>
<feature type="mutagenesis site" description="DncV-GFP fusion cleaved by Cap3." evidence="10">
    <original>S</original>
    <variation>E</variation>
    <location>
        <position position="435"/>
    </location>
</feature>
<feature type="mutagenesis site" description="Loss of defense against phage T2, T5, T6 but not P1." evidence="11">
    <original>G</original>
    <variation>A</variation>
    <location>
        <position position="436"/>
    </location>
</feature>
<feature type="mutagenesis site" description="Loss of defense against phage T2, T4, T5 or T6, significantly decreased interaction with Cap2. DncV-GFP fusion cleaved by Cap3." evidence="10">
    <original>G</original>
    <variation>E</variation>
    <location>
        <position position="436"/>
    </location>
</feature>
<feature type="mutagenesis site" description="Loss of defense against phage T2, T5, T6 but not P1." evidence="11">
    <location>
        <position position="436"/>
    </location>
</feature>
<feature type="strand" evidence="33">
    <location>
        <begin position="3"/>
        <end position="6"/>
    </location>
</feature>
<feature type="helix" evidence="33">
    <location>
        <begin position="8"/>
        <end position="12"/>
    </location>
</feature>
<feature type="turn" evidence="33">
    <location>
        <begin position="14"/>
        <end position="16"/>
    </location>
</feature>
<feature type="helix" evidence="33">
    <location>
        <begin position="18"/>
        <end position="22"/>
    </location>
</feature>
<feature type="helix" evidence="33">
    <location>
        <begin position="26"/>
        <end position="59"/>
    </location>
</feature>
<feature type="helix" evidence="33">
    <location>
        <begin position="64"/>
        <end position="72"/>
    </location>
</feature>
<feature type="helix" evidence="33">
    <location>
        <begin position="75"/>
        <end position="78"/>
    </location>
</feature>
<feature type="helix" evidence="33">
    <location>
        <begin position="81"/>
        <end position="93"/>
    </location>
</feature>
<feature type="helix" evidence="33">
    <location>
        <begin position="96"/>
        <end position="103"/>
    </location>
</feature>
<feature type="strand" evidence="33">
    <location>
        <begin position="108"/>
        <end position="112"/>
    </location>
</feature>
<feature type="helix" evidence="33">
    <location>
        <begin position="113"/>
        <end position="115"/>
    </location>
</feature>
<feature type="turn" evidence="33">
    <location>
        <begin position="116"/>
        <end position="118"/>
    </location>
</feature>
<feature type="strand" evidence="33">
    <location>
        <begin position="130"/>
        <end position="140"/>
    </location>
</feature>
<feature type="strand" evidence="32">
    <location>
        <begin position="144"/>
        <end position="146"/>
    </location>
</feature>
<feature type="helix" evidence="33">
    <location>
        <begin position="151"/>
        <end position="168"/>
    </location>
</feature>
<feature type="strand" evidence="33">
    <location>
        <begin position="172"/>
        <end position="176"/>
    </location>
</feature>
<feature type="strand" evidence="33">
    <location>
        <begin position="181"/>
        <end position="185"/>
    </location>
</feature>
<feature type="helix" evidence="33">
    <location>
        <begin position="186"/>
        <end position="188"/>
    </location>
</feature>
<feature type="strand" evidence="33">
    <location>
        <begin position="190"/>
        <end position="194"/>
    </location>
</feature>
<feature type="strand" evidence="33">
    <location>
        <begin position="196"/>
        <end position="200"/>
    </location>
</feature>
<feature type="helix" evidence="31">
    <location>
        <begin position="201"/>
        <end position="213"/>
    </location>
</feature>
<feature type="helix" evidence="33">
    <location>
        <begin position="242"/>
        <end position="244"/>
    </location>
</feature>
<feature type="strand" evidence="33">
    <location>
        <begin position="246"/>
        <end position="248"/>
    </location>
</feature>
<feature type="strand" evidence="33">
    <location>
        <begin position="250"/>
        <end position="253"/>
    </location>
</feature>
<feature type="strand" evidence="33">
    <location>
        <begin position="255"/>
        <end position="258"/>
    </location>
</feature>
<feature type="helix" evidence="33">
    <location>
        <begin position="261"/>
        <end position="275"/>
    </location>
</feature>
<feature type="helix" evidence="33">
    <location>
        <begin position="278"/>
        <end position="293"/>
    </location>
</feature>
<feature type="helix" evidence="33">
    <location>
        <begin position="301"/>
        <end position="314"/>
    </location>
</feature>
<feature type="helix" evidence="33">
    <location>
        <begin position="322"/>
        <end position="338"/>
    </location>
</feature>
<feature type="helix" evidence="33">
    <location>
        <begin position="356"/>
        <end position="358"/>
    </location>
</feature>
<feature type="helix" evidence="33">
    <location>
        <begin position="361"/>
        <end position="381"/>
    </location>
</feature>
<feature type="helix" evidence="33">
    <location>
        <begin position="386"/>
        <end position="397"/>
    </location>
</feature>
<feature type="helix" evidence="33">
    <location>
        <begin position="404"/>
        <end position="406"/>
    </location>
</feature>
<feature type="strand" evidence="33">
    <location>
        <begin position="407"/>
        <end position="411"/>
    </location>
</feature>
<proteinExistence type="evidence at protein level"/>
<evidence type="ECO:0000250" key="1">
    <source>
        <dbReference type="UniProtKB" id="P0DSP4"/>
    </source>
</evidence>
<evidence type="ECO:0000256" key="2">
    <source>
        <dbReference type="SAM" id="MobiDB-lite"/>
    </source>
</evidence>
<evidence type="ECO:0000269" key="3">
    <source>
    </source>
</evidence>
<evidence type="ECO:0000269" key="4">
    <source>
    </source>
</evidence>
<evidence type="ECO:0000269" key="5">
    <source>
    </source>
</evidence>
<evidence type="ECO:0000269" key="6">
    <source>
    </source>
</evidence>
<evidence type="ECO:0000269" key="7">
    <source>
    </source>
</evidence>
<evidence type="ECO:0000269" key="8">
    <source>
    </source>
</evidence>
<evidence type="ECO:0000269" key="9">
    <source>
    </source>
</evidence>
<evidence type="ECO:0000269" key="10">
    <source>
    </source>
</evidence>
<evidence type="ECO:0000269" key="11">
    <source>
    </source>
</evidence>
<evidence type="ECO:0000303" key="12">
    <source>
    </source>
</evidence>
<evidence type="ECO:0000303" key="13">
    <source>
    </source>
</evidence>
<evidence type="ECO:0000303" key="14">
    <source>
    </source>
</evidence>
<evidence type="ECO:0000305" key="15">
    <source>
    </source>
</evidence>
<evidence type="ECO:0000305" key="16">
    <source>
    </source>
</evidence>
<evidence type="ECO:0000305" key="17">
    <source>
    </source>
</evidence>
<evidence type="ECO:0000305" key="18">
    <source>
    </source>
</evidence>
<evidence type="ECO:0000305" key="19">
    <source>
    </source>
</evidence>
<evidence type="ECO:0007744" key="20">
    <source>
        <dbReference type="PDB" id="4TXY"/>
    </source>
</evidence>
<evidence type="ECO:0007744" key="21">
    <source>
        <dbReference type="PDB" id="4TXZ"/>
    </source>
</evidence>
<evidence type="ECO:0007744" key="22">
    <source>
        <dbReference type="PDB" id="4TY0"/>
    </source>
</evidence>
<evidence type="ECO:0007744" key="23">
    <source>
        <dbReference type="PDB" id="4U03"/>
    </source>
</evidence>
<evidence type="ECO:0007744" key="24">
    <source>
        <dbReference type="PDB" id="4U0L"/>
    </source>
</evidence>
<evidence type="ECO:0007744" key="25">
    <source>
        <dbReference type="PDB" id="4U0M"/>
    </source>
</evidence>
<evidence type="ECO:0007744" key="26">
    <source>
        <dbReference type="PDB" id="4U0N"/>
    </source>
</evidence>
<evidence type="ECO:0007744" key="27">
    <source>
        <dbReference type="PDB" id="4XJ1"/>
    </source>
</evidence>
<evidence type="ECO:0007744" key="28">
    <source>
        <dbReference type="PDB" id="4XJ3"/>
    </source>
</evidence>
<evidence type="ECO:0007744" key="29">
    <source>
        <dbReference type="PDB" id="4XJ4"/>
    </source>
</evidence>
<evidence type="ECO:0007744" key="30">
    <source>
        <dbReference type="PDB" id="4XJ5"/>
    </source>
</evidence>
<evidence type="ECO:0007829" key="31">
    <source>
        <dbReference type="PDB" id="4TY0"/>
    </source>
</evidence>
<evidence type="ECO:0007829" key="32">
    <source>
        <dbReference type="PDB" id="4XJ4"/>
    </source>
</evidence>
<evidence type="ECO:0007829" key="33">
    <source>
        <dbReference type="PDB" id="4XJ5"/>
    </source>
</evidence>